<geneLocation type="mitochondrion"/>
<feature type="chain" id="PRO_0000061004" description="Cytochrome b">
    <location>
        <begin position="1"/>
        <end position="382"/>
    </location>
</feature>
<feature type="transmembrane region" description="Helical" evidence="2">
    <location>
        <begin position="33"/>
        <end position="53"/>
    </location>
</feature>
<feature type="transmembrane region" description="Helical" evidence="2">
    <location>
        <begin position="77"/>
        <end position="98"/>
    </location>
</feature>
<feature type="transmembrane region" description="Helical" evidence="2">
    <location>
        <begin position="113"/>
        <end position="133"/>
    </location>
</feature>
<feature type="transmembrane region" description="Helical" evidence="2">
    <location>
        <begin position="178"/>
        <end position="198"/>
    </location>
</feature>
<feature type="transmembrane region" description="Helical" evidence="2">
    <location>
        <begin position="226"/>
        <end position="246"/>
    </location>
</feature>
<feature type="transmembrane region" description="Helical" evidence="2">
    <location>
        <begin position="288"/>
        <end position="308"/>
    </location>
</feature>
<feature type="transmembrane region" description="Helical" evidence="2">
    <location>
        <begin position="320"/>
        <end position="340"/>
    </location>
</feature>
<feature type="transmembrane region" description="Helical" evidence="2">
    <location>
        <begin position="347"/>
        <end position="367"/>
    </location>
</feature>
<feature type="binding site" description="axial binding residue" evidence="2">
    <location>
        <position position="83"/>
    </location>
    <ligand>
        <name>heme b</name>
        <dbReference type="ChEBI" id="CHEBI:60344"/>
        <label>b562</label>
    </ligand>
    <ligandPart>
        <name>Fe</name>
        <dbReference type="ChEBI" id="CHEBI:18248"/>
    </ligandPart>
</feature>
<feature type="binding site" description="axial binding residue" evidence="2">
    <location>
        <position position="97"/>
    </location>
    <ligand>
        <name>heme b</name>
        <dbReference type="ChEBI" id="CHEBI:60344"/>
        <label>b566</label>
    </ligand>
    <ligandPart>
        <name>Fe</name>
        <dbReference type="ChEBI" id="CHEBI:18248"/>
    </ligandPart>
</feature>
<feature type="binding site" description="axial binding residue" evidence="2">
    <location>
        <position position="182"/>
    </location>
    <ligand>
        <name>heme b</name>
        <dbReference type="ChEBI" id="CHEBI:60344"/>
        <label>b562</label>
    </ligand>
    <ligandPart>
        <name>Fe</name>
        <dbReference type="ChEBI" id="CHEBI:18248"/>
    </ligandPart>
</feature>
<feature type="binding site" description="axial binding residue" evidence="2">
    <location>
        <position position="196"/>
    </location>
    <ligand>
        <name>heme b</name>
        <dbReference type="ChEBI" id="CHEBI:60344"/>
        <label>b566</label>
    </ligand>
    <ligandPart>
        <name>Fe</name>
        <dbReference type="ChEBI" id="CHEBI:18248"/>
    </ligandPart>
</feature>
<feature type="binding site" evidence="2">
    <location>
        <position position="201"/>
    </location>
    <ligand>
        <name>a ubiquinone</name>
        <dbReference type="ChEBI" id="CHEBI:16389"/>
    </ligand>
</feature>
<sequence length="382" mass="42793">MTNLRKTHPLMKIISQSFIDLPAPSNISAWWNFGSLLGICLIIQIVTGLFLAMHYTSDTSTAFSSVAHICRDVNHGWLIRNIHANGASMFFMCLFLHVGRGVYYGSYLFKETWNIGVILLLTVMATAFVGYVLPWGQMSFWGATVITNLLSAIPYIGTTLVEWIWGGFSVDKATLTRFFAFHFILPFIIMALVMVHLLFLHETGSNNPSGINSNADKIPFHPYYTIKDILGLILMTTVLLTLAMFSPDLLGDPDNFTPANPLNTPPHIKPEWYFLFAYAILRSIPNKLGGVLALLTSILVLLIIPLLHTSTQRGLMFRPISQTLFWILTANLLTLTWIGGQPVEEPFIIIGQLASILYFTLIIILLPLAGVFENRMLEPKFP</sequence>
<evidence type="ECO:0000250" key="1"/>
<evidence type="ECO:0000250" key="2">
    <source>
        <dbReference type="UniProtKB" id="P00157"/>
    </source>
</evidence>
<evidence type="ECO:0000255" key="3">
    <source>
        <dbReference type="PROSITE-ProRule" id="PRU00967"/>
    </source>
</evidence>
<evidence type="ECO:0000255" key="4">
    <source>
        <dbReference type="PROSITE-ProRule" id="PRU00968"/>
    </source>
</evidence>
<reference key="1">
    <citation type="journal article" date="1996" name="J. Mammal. Evol.">
        <title>Relationships among didelphid marsupials based on sequence variation in the mitochondrial cytochrome b gene.</title>
        <authorList>
            <person name="Patton J.L."/>
            <person name="dos Reis Maria S.F."/>
            <person name="da Silva N.F."/>
        </authorList>
    </citation>
    <scope>NUCLEOTIDE SEQUENCE [GENOMIC DNA]</scope>
</reference>
<accession>Q34677</accession>
<comment type="function">
    <text evidence="2">Component of the ubiquinol-cytochrome c reductase complex (complex III or cytochrome b-c1 complex) that is part of the mitochondrial respiratory chain. The b-c1 complex mediates electron transfer from ubiquinol to cytochrome c. Contributes to the generation of a proton gradient across the mitochondrial membrane that is then used for ATP synthesis.</text>
</comment>
<comment type="cofactor">
    <cofactor evidence="2">
        <name>heme b</name>
        <dbReference type="ChEBI" id="CHEBI:60344"/>
    </cofactor>
    <text evidence="2">Binds 2 heme b groups non-covalently.</text>
</comment>
<comment type="subunit">
    <text evidence="2">The cytochrome bc1 complex contains 11 subunits: 3 respiratory subunits (MT-CYB, CYC1 and UQCRFS1), 2 core proteins (UQCRC1 and UQCRC2) and 6 low-molecular weight proteins (UQCRH/QCR6, UQCRB/QCR7, UQCRQ/QCR8, UQCR10/QCR9, UQCR11/QCR10 and a cleavage product of UQCRFS1). This cytochrome bc1 complex then forms a dimer.</text>
</comment>
<comment type="subcellular location">
    <subcellularLocation>
        <location evidence="2">Mitochondrion inner membrane</location>
        <topology evidence="2">Multi-pass membrane protein</topology>
    </subcellularLocation>
</comment>
<comment type="miscellaneous">
    <text evidence="1">Heme 1 (or BL or b562) is low-potential and absorbs at about 562 nm, and heme 2 (or BH or b566) is high-potential and absorbs at about 566 nm.</text>
</comment>
<comment type="similarity">
    <text evidence="3 4">Belongs to the cytochrome b family.</text>
</comment>
<comment type="caution">
    <text evidence="2">The full-length protein contains only eight transmembrane helices, not nine as predicted by bioinformatics tools.</text>
</comment>
<keyword id="KW-0249">Electron transport</keyword>
<keyword id="KW-0349">Heme</keyword>
<keyword id="KW-0408">Iron</keyword>
<keyword id="KW-0472">Membrane</keyword>
<keyword id="KW-0479">Metal-binding</keyword>
<keyword id="KW-0496">Mitochondrion</keyword>
<keyword id="KW-0999">Mitochondrion inner membrane</keyword>
<keyword id="KW-0679">Respiratory chain</keyword>
<keyword id="KW-0812">Transmembrane</keyword>
<keyword id="KW-1133">Transmembrane helix</keyword>
<keyword id="KW-0813">Transport</keyword>
<keyword id="KW-0830">Ubiquinone</keyword>
<dbReference type="EMBL" id="U34666">
    <property type="protein sequence ID" value="AAA99748.1"/>
    <property type="molecule type" value="Genomic_DNA"/>
</dbReference>
<dbReference type="SMR" id="Q34677"/>
<dbReference type="GO" id="GO:0005743">
    <property type="term" value="C:mitochondrial inner membrane"/>
    <property type="evidence" value="ECO:0007669"/>
    <property type="project" value="UniProtKB-SubCell"/>
</dbReference>
<dbReference type="GO" id="GO:0045275">
    <property type="term" value="C:respiratory chain complex III"/>
    <property type="evidence" value="ECO:0007669"/>
    <property type="project" value="InterPro"/>
</dbReference>
<dbReference type="GO" id="GO:0046872">
    <property type="term" value="F:metal ion binding"/>
    <property type="evidence" value="ECO:0007669"/>
    <property type="project" value="UniProtKB-KW"/>
</dbReference>
<dbReference type="GO" id="GO:0008121">
    <property type="term" value="F:ubiquinol-cytochrome-c reductase activity"/>
    <property type="evidence" value="ECO:0007669"/>
    <property type="project" value="InterPro"/>
</dbReference>
<dbReference type="GO" id="GO:0006122">
    <property type="term" value="P:mitochondrial electron transport, ubiquinol to cytochrome c"/>
    <property type="evidence" value="ECO:0007669"/>
    <property type="project" value="TreeGrafter"/>
</dbReference>
<dbReference type="CDD" id="cd00290">
    <property type="entry name" value="cytochrome_b_C"/>
    <property type="match status" value="1"/>
</dbReference>
<dbReference type="CDD" id="cd00284">
    <property type="entry name" value="Cytochrome_b_N"/>
    <property type="match status" value="1"/>
</dbReference>
<dbReference type="FunFam" id="1.20.810.10:FF:000002">
    <property type="entry name" value="Cytochrome b"/>
    <property type="match status" value="1"/>
</dbReference>
<dbReference type="Gene3D" id="1.20.810.10">
    <property type="entry name" value="Cytochrome Bc1 Complex, Chain C"/>
    <property type="match status" value="1"/>
</dbReference>
<dbReference type="InterPro" id="IPR005798">
    <property type="entry name" value="Cyt_b/b6_C"/>
</dbReference>
<dbReference type="InterPro" id="IPR036150">
    <property type="entry name" value="Cyt_b/b6_C_sf"/>
</dbReference>
<dbReference type="InterPro" id="IPR005797">
    <property type="entry name" value="Cyt_b/b6_N"/>
</dbReference>
<dbReference type="InterPro" id="IPR027387">
    <property type="entry name" value="Cytb/b6-like_sf"/>
</dbReference>
<dbReference type="InterPro" id="IPR030689">
    <property type="entry name" value="Cytochrome_b"/>
</dbReference>
<dbReference type="InterPro" id="IPR048260">
    <property type="entry name" value="Cytochrome_b_C_euk/bac"/>
</dbReference>
<dbReference type="InterPro" id="IPR048259">
    <property type="entry name" value="Cytochrome_b_N_euk/bac"/>
</dbReference>
<dbReference type="InterPro" id="IPR016174">
    <property type="entry name" value="Di-haem_cyt_TM"/>
</dbReference>
<dbReference type="PANTHER" id="PTHR19271">
    <property type="entry name" value="CYTOCHROME B"/>
    <property type="match status" value="1"/>
</dbReference>
<dbReference type="PANTHER" id="PTHR19271:SF16">
    <property type="entry name" value="CYTOCHROME B"/>
    <property type="match status" value="1"/>
</dbReference>
<dbReference type="Pfam" id="PF00032">
    <property type="entry name" value="Cytochrom_B_C"/>
    <property type="match status" value="1"/>
</dbReference>
<dbReference type="Pfam" id="PF00033">
    <property type="entry name" value="Cytochrome_B"/>
    <property type="match status" value="1"/>
</dbReference>
<dbReference type="PIRSF" id="PIRSF038885">
    <property type="entry name" value="COB"/>
    <property type="match status" value="1"/>
</dbReference>
<dbReference type="SUPFAM" id="SSF81648">
    <property type="entry name" value="a domain/subunit of cytochrome bc1 complex (Ubiquinol-cytochrome c reductase)"/>
    <property type="match status" value="1"/>
</dbReference>
<dbReference type="SUPFAM" id="SSF81342">
    <property type="entry name" value="Transmembrane di-heme cytochromes"/>
    <property type="match status" value="1"/>
</dbReference>
<dbReference type="PROSITE" id="PS51003">
    <property type="entry name" value="CYTB_CTER"/>
    <property type="match status" value="1"/>
</dbReference>
<dbReference type="PROSITE" id="PS51002">
    <property type="entry name" value="CYTB_NTER"/>
    <property type="match status" value="1"/>
</dbReference>
<name>CYB_GLIVE</name>
<organism>
    <name type="scientific">Glironia venusta</name>
    <name type="common">Bushy-tailed opossum</name>
    <dbReference type="NCBI Taxonomy" id="42715"/>
    <lineage>
        <taxon>Eukaryota</taxon>
        <taxon>Metazoa</taxon>
        <taxon>Chordata</taxon>
        <taxon>Craniata</taxon>
        <taxon>Vertebrata</taxon>
        <taxon>Euteleostomi</taxon>
        <taxon>Mammalia</taxon>
        <taxon>Metatheria</taxon>
        <taxon>Didelphimorphia</taxon>
        <taxon>Didelphidae</taxon>
        <taxon>Glironia</taxon>
    </lineage>
</organism>
<gene>
    <name type="primary">MT-CYB</name>
    <name type="synonym">COB</name>
    <name type="synonym">CYTB</name>
    <name type="synonym">MTCYB</name>
</gene>
<protein>
    <recommendedName>
        <fullName>Cytochrome b</fullName>
    </recommendedName>
    <alternativeName>
        <fullName>Complex III subunit 3</fullName>
    </alternativeName>
    <alternativeName>
        <fullName>Complex III subunit III</fullName>
    </alternativeName>
    <alternativeName>
        <fullName>Cytochrome b-c1 complex subunit 3</fullName>
    </alternativeName>
    <alternativeName>
        <fullName>Ubiquinol-cytochrome-c reductase complex cytochrome b subunit</fullName>
    </alternativeName>
</protein>
<proteinExistence type="inferred from homology"/>